<accession>Q9H6Z4</accession>
<accession>B2RAT8</accession>
<accession>O60405</accession>
<accession>O75759</accession>
<accession>O75760</accession>
<accession>Q9BT47</accession>
<accession>Q9UG74</accession>
<sequence>MADLANEEKPAIAPPVFVFQKDKGQKSPAEQKNLSDSGEEPRGEAEAPHHGTGHPESAGEHALEPPAPAGASASTPPPPAPEAQLPPFPRELAGRSAGGSSPEGGEDSDREDGNYCPPVKRERTSSLTQFPPSQSEERSSGFRLKPPTLIHGQAPSAGLPSQKPKEQQRSVLRPAVLQAPQPKALSQTVPSSGTNGVSLPADCTGAVPAASPDTAAWRSPSEAADEVCALEEKEPQKNESSNASEEEACEKKDPATQQAFVFGQNLRDRVKLINESVDEADMENAGHPSADTPTATNYFLQYISSSLENSTNSADASSNKFVFGQNMSERVLSPPKLNEVSSDANRENAAAESGSESSSQEATPEKESLAESAAAYTKATARKCLLEKVEVITGEEAESNVLQMQCKLFVFDKTSQSWVERGRGLLRLNDMASTDDGTLQSRLVMRTQGSLRLILNTKLWAQMQIDKASEKSIRITAMDTEDQGVKVFLISASSKDTGQLYAALHHRILALRSRVEQEQEAKMPAPEPGAAPSNEEDDSDDDDVLAPSGATAAGAGDEGDGQTTGST</sequence>
<reference key="1">
    <citation type="journal article" date="1998" name="FEBS Lett.">
        <title>Human RanBP3, a group of nuclear RanGTP binding proteins.</title>
        <authorList>
            <person name="Mueller L."/>
            <person name="Cordes V.C."/>
            <person name="Bischoff F.R."/>
            <person name="Ponstingl H."/>
        </authorList>
    </citation>
    <scope>NUCLEOTIDE SEQUENCE [MRNA] (ISOFORMS 2 AND 3)</scope>
    <scope>FUNCTION</scope>
    <scope>TISSUE SPECIFICITY</scope>
    <scope>INTERACTION WITH CHC1</scope>
</reference>
<reference key="2">
    <citation type="journal article" date="2004" name="Nat. Genet.">
        <title>Complete sequencing and characterization of 21,243 full-length human cDNAs.</title>
        <authorList>
            <person name="Ota T."/>
            <person name="Suzuki Y."/>
            <person name="Nishikawa T."/>
            <person name="Otsuki T."/>
            <person name="Sugiyama T."/>
            <person name="Irie R."/>
            <person name="Wakamatsu A."/>
            <person name="Hayashi K."/>
            <person name="Sato H."/>
            <person name="Nagai K."/>
            <person name="Kimura K."/>
            <person name="Makita H."/>
            <person name="Sekine M."/>
            <person name="Obayashi M."/>
            <person name="Nishi T."/>
            <person name="Shibahara T."/>
            <person name="Tanaka T."/>
            <person name="Ishii S."/>
            <person name="Yamamoto J."/>
            <person name="Saito K."/>
            <person name="Kawai Y."/>
            <person name="Isono Y."/>
            <person name="Nakamura Y."/>
            <person name="Nagahari K."/>
            <person name="Murakami K."/>
            <person name="Yasuda T."/>
            <person name="Iwayanagi T."/>
            <person name="Wagatsuma M."/>
            <person name="Shiratori A."/>
            <person name="Sudo H."/>
            <person name="Hosoiri T."/>
            <person name="Kaku Y."/>
            <person name="Kodaira H."/>
            <person name="Kondo H."/>
            <person name="Sugawara M."/>
            <person name="Takahashi M."/>
            <person name="Kanda K."/>
            <person name="Yokoi T."/>
            <person name="Furuya T."/>
            <person name="Kikkawa E."/>
            <person name="Omura Y."/>
            <person name="Abe K."/>
            <person name="Kamihara K."/>
            <person name="Katsuta N."/>
            <person name="Sato K."/>
            <person name="Tanikawa M."/>
            <person name="Yamazaki M."/>
            <person name="Ninomiya K."/>
            <person name="Ishibashi T."/>
            <person name="Yamashita H."/>
            <person name="Murakawa K."/>
            <person name="Fujimori K."/>
            <person name="Tanai H."/>
            <person name="Kimata M."/>
            <person name="Watanabe M."/>
            <person name="Hiraoka S."/>
            <person name="Chiba Y."/>
            <person name="Ishida S."/>
            <person name="Ono Y."/>
            <person name="Takiguchi S."/>
            <person name="Watanabe S."/>
            <person name="Yosida M."/>
            <person name="Hotuta T."/>
            <person name="Kusano J."/>
            <person name="Kanehori K."/>
            <person name="Takahashi-Fujii A."/>
            <person name="Hara H."/>
            <person name="Tanase T.-O."/>
            <person name="Nomura Y."/>
            <person name="Togiya S."/>
            <person name="Komai F."/>
            <person name="Hara R."/>
            <person name="Takeuchi K."/>
            <person name="Arita M."/>
            <person name="Imose N."/>
            <person name="Musashino K."/>
            <person name="Yuuki H."/>
            <person name="Oshima A."/>
            <person name="Sasaki N."/>
            <person name="Aotsuka S."/>
            <person name="Yoshikawa Y."/>
            <person name="Matsunawa H."/>
            <person name="Ichihara T."/>
            <person name="Shiohata N."/>
            <person name="Sano S."/>
            <person name="Moriya S."/>
            <person name="Momiyama H."/>
            <person name="Satoh N."/>
            <person name="Takami S."/>
            <person name="Terashima Y."/>
            <person name="Suzuki O."/>
            <person name="Nakagawa S."/>
            <person name="Senoh A."/>
            <person name="Mizoguchi H."/>
            <person name="Goto Y."/>
            <person name="Shimizu F."/>
            <person name="Wakebe H."/>
            <person name="Hishigaki H."/>
            <person name="Watanabe T."/>
            <person name="Sugiyama A."/>
            <person name="Takemoto M."/>
            <person name="Kawakami B."/>
            <person name="Yamazaki M."/>
            <person name="Watanabe K."/>
            <person name="Kumagai A."/>
            <person name="Itakura S."/>
            <person name="Fukuzumi Y."/>
            <person name="Fujimori Y."/>
            <person name="Komiyama M."/>
            <person name="Tashiro H."/>
            <person name="Tanigami A."/>
            <person name="Fujiwara T."/>
            <person name="Ono T."/>
            <person name="Yamada K."/>
            <person name="Fujii Y."/>
            <person name="Ozaki K."/>
            <person name="Hirao M."/>
            <person name="Ohmori Y."/>
            <person name="Kawabata A."/>
            <person name="Hikiji T."/>
            <person name="Kobatake N."/>
            <person name="Inagaki H."/>
            <person name="Ikema Y."/>
            <person name="Okamoto S."/>
            <person name="Okitani R."/>
            <person name="Kawakami T."/>
            <person name="Noguchi S."/>
            <person name="Itoh T."/>
            <person name="Shigeta K."/>
            <person name="Senba T."/>
            <person name="Matsumura K."/>
            <person name="Nakajima Y."/>
            <person name="Mizuno T."/>
            <person name="Morinaga M."/>
            <person name="Sasaki M."/>
            <person name="Togashi T."/>
            <person name="Oyama M."/>
            <person name="Hata H."/>
            <person name="Watanabe M."/>
            <person name="Komatsu T."/>
            <person name="Mizushima-Sugano J."/>
            <person name="Satoh T."/>
            <person name="Shirai Y."/>
            <person name="Takahashi Y."/>
            <person name="Nakagawa K."/>
            <person name="Okumura K."/>
            <person name="Nagase T."/>
            <person name="Nomura N."/>
            <person name="Kikuchi H."/>
            <person name="Masuho Y."/>
            <person name="Yamashita R."/>
            <person name="Nakai K."/>
            <person name="Yada T."/>
            <person name="Nakamura Y."/>
            <person name="Ohara O."/>
            <person name="Isogai T."/>
            <person name="Sugano S."/>
        </authorList>
    </citation>
    <scope>NUCLEOTIDE SEQUENCE [LARGE SCALE MRNA] (ISOFORMS 1 AND 3)</scope>
    <source>
        <tissue>Colon</tissue>
        <tissue>Testis</tissue>
    </source>
</reference>
<reference key="3">
    <citation type="journal article" date="2007" name="BMC Genomics">
        <title>The full-ORF clone resource of the German cDNA consortium.</title>
        <authorList>
            <person name="Bechtel S."/>
            <person name="Rosenfelder H."/>
            <person name="Duda A."/>
            <person name="Schmidt C.P."/>
            <person name="Ernst U."/>
            <person name="Wellenreuther R."/>
            <person name="Mehrle A."/>
            <person name="Schuster C."/>
            <person name="Bahr A."/>
            <person name="Bloecker H."/>
            <person name="Heubner D."/>
            <person name="Hoerlein A."/>
            <person name="Michel G."/>
            <person name="Wedler H."/>
            <person name="Koehrer K."/>
            <person name="Ottenwaelder B."/>
            <person name="Poustka A."/>
            <person name="Wiemann S."/>
            <person name="Schupp I."/>
        </authorList>
    </citation>
    <scope>NUCLEOTIDE SEQUENCE [LARGE SCALE MRNA] (ISOFORM 1)</scope>
    <source>
        <tissue>Uterus</tissue>
    </source>
</reference>
<reference key="4">
    <citation type="journal article" date="2004" name="Nature">
        <title>The DNA sequence and biology of human chromosome 19.</title>
        <authorList>
            <person name="Grimwood J."/>
            <person name="Gordon L.A."/>
            <person name="Olsen A.S."/>
            <person name="Terry A."/>
            <person name="Schmutz J."/>
            <person name="Lamerdin J.E."/>
            <person name="Hellsten U."/>
            <person name="Goodstein D."/>
            <person name="Couronne O."/>
            <person name="Tran-Gyamfi M."/>
            <person name="Aerts A."/>
            <person name="Altherr M."/>
            <person name="Ashworth L."/>
            <person name="Bajorek E."/>
            <person name="Black S."/>
            <person name="Branscomb E."/>
            <person name="Caenepeel S."/>
            <person name="Carrano A.V."/>
            <person name="Caoile C."/>
            <person name="Chan Y.M."/>
            <person name="Christensen M."/>
            <person name="Cleland C.A."/>
            <person name="Copeland A."/>
            <person name="Dalin E."/>
            <person name="Dehal P."/>
            <person name="Denys M."/>
            <person name="Detter J.C."/>
            <person name="Escobar J."/>
            <person name="Flowers D."/>
            <person name="Fotopulos D."/>
            <person name="Garcia C."/>
            <person name="Georgescu A.M."/>
            <person name="Glavina T."/>
            <person name="Gomez M."/>
            <person name="Gonzales E."/>
            <person name="Groza M."/>
            <person name="Hammon N."/>
            <person name="Hawkins T."/>
            <person name="Haydu L."/>
            <person name="Ho I."/>
            <person name="Huang W."/>
            <person name="Israni S."/>
            <person name="Jett J."/>
            <person name="Kadner K."/>
            <person name="Kimball H."/>
            <person name="Kobayashi A."/>
            <person name="Larionov V."/>
            <person name="Leem S.-H."/>
            <person name="Lopez F."/>
            <person name="Lou Y."/>
            <person name="Lowry S."/>
            <person name="Malfatti S."/>
            <person name="Martinez D."/>
            <person name="McCready P.M."/>
            <person name="Medina C."/>
            <person name="Morgan J."/>
            <person name="Nelson K."/>
            <person name="Nolan M."/>
            <person name="Ovcharenko I."/>
            <person name="Pitluck S."/>
            <person name="Pollard M."/>
            <person name="Popkie A.P."/>
            <person name="Predki P."/>
            <person name="Quan G."/>
            <person name="Ramirez L."/>
            <person name="Rash S."/>
            <person name="Retterer J."/>
            <person name="Rodriguez A."/>
            <person name="Rogers S."/>
            <person name="Salamov A."/>
            <person name="Salazar A."/>
            <person name="She X."/>
            <person name="Smith D."/>
            <person name="Slezak T."/>
            <person name="Solovyev V."/>
            <person name="Thayer N."/>
            <person name="Tice H."/>
            <person name="Tsai M."/>
            <person name="Ustaszewska A."/>
            <person name="Vo N."/>
            <person name="Wagner M."/>
            <person name="Wheeler J."/>
            <person name="Wu K."/>
            <person name="Xie G."/>
            <person name="Yang J."/>
            <person name="Dubchak I."/>
            <person name="Furey T.S."/>
            <person name="DeJong P."/>
            <person name="Dickson M."/>
            <person name="Gordon D."/>
            <person name="Eichler E.E."/>
            <person name="Pennacchio L.A."/>
            <person name="Richardson P."/>
            <person name="Stubbs L."/>
            <person name="Rokhsar D.S."/>
            <person name="Myers R.M."/>
            <person name="Rubin E.M."/>
            <person name="Lucas S.M."/>
        </authorList>
    </citation>
    <scope>NUCLEOTIDE SEQUENCE [LARGE SCALE GENOMIC DNA]</scope>
</reference>
<reference key="5">
    <citation type="journal article" date="2004" name="Genome Res.">
        <title>The status, quality, and expansion of the NIH full-length cDNA project: the Mammalian Gene Collection (MGC).</title>
        <authorList>
            <consortium name="The MGC Project Team"/>
        </authorList>
    </citation>
    <scope>NUCLEOTIDE SEQUENCE [LARGE SCALE MRNA] OF 1-418 (ISOFORM 3)</scope>
    <source>
        <tissue>Eye</tissue>
    </source>
</reference>
<reference key="6">
    <citation type="journal article" date="1999" name="Mol. Cell. Biol.">
        <title>RanBP3 contains an unusual nuclear localization signal that is imported preferentially by importin-alpha3.</title>
        <authorList>
            <person name="Welch K."/>
            <person name="Franke J."/>
            <person name="Koehler M."/>
            <person name="Macara I.G."/>
        </authorList>
    </citation>
    <scope>SUBCELLULAR LOCATION</scope>
    <scope>MUTAGENESIS OF ARG-110; 117-PRO-PRO-118; PRO-117; PRO-118; LYS-120 AND ARG-121</scope>
</reference>
<reference key="7">
    <citation type="journal article" date="2001" name="EMBO Rep.">
        <title>RanBP3 influences interactions between CRM1 and its nuclear protein export substrates.</title>
        <authorList>
            <person name="Englmeier L."/>
            <person name="Fornerod M."/>
            <person name="Bischoff F.R."/>
            <person name="Petosa C."/>
            <person name="Mattaj I.W."/>
            <person name="Kutay U."/>
        </authorList>
    </citation>
    <scope>FUNCTION</scope>
    <scope>INTERACTION WITH XPO1</scope>
</reference>
<reference key="8">
    <citation type="journal article" date="2001" name="J. Cell Biol.">
        <title>Ran-binding protein 3 is a cofactor for Crm1-mediated nuclear protein export.</title>
        <authorList>
            <person name="Lindsay M.E."/>
            <person name="Holaska J.M."/>
            <person name="Welch K."/>
            <person name="Paschal B.M."/>
            <person name="Macara I.G."/>
        </authorList>
    </citation>
    <scope>FUNCTION</scope>
    <scope>INTERACTION WITH XPO1</scope>
</reference>
<reference key="9">
    <citation type="journal article" date="2002" name="J. Biol. Chem.">
        <title>Ran-binding protein 3 links Crm1 to the Ran guanine nucleotide exchange factor.</title>
        <authorList>
            <person name="Nemergut M.E."/>
            <person name="Lindsay M.E."/>
            <person name="Brownawell A.M."/>
            <person name="Macara I.G."/>
        </authorList>
    </citation>
    <scope>FUNCTION</scope>
    <scope>INTERACTION WITH CHC1</scope>
</reference>
<reference key="10">
    <citation type="journal article" date="2006" name="Cell">
        <title>Global, in vivo, and site-specific phosphorylation dynamics in signaling networks.</title>
        <authorList>
            <person name="Olsen J.V."/>
            <person name="Blagoev B."/>
            <person name="Gnad F."/>
            <person name="Macek B."/>
            <person name="Kumar C."/>
            <person name="Mortensen P."/>
            <person name="Mann M."/>
        </authorList>
    </citation>
    <scope>PHOSPHORYLATION [LARGE SCALE ANALYSIS] AT SER-108</scope>
    <scope>IDENTIFICATION BY MASS SPECTROMETRY [LARGE SCALE ANALYSIS]</scope>
    <source>
        <tissue>Cervix carcinoma</tissue>
    </source>
</reference>
<reference key="11">
    <citation type="journal article" date="2007" name="Science">
        <title>ATM and ATR substrate analysis reveals extensive protein networks responsive to DNA damage.</title>
        <authorList>
            <person name="Matsuoka S."/>
            <person name="Ballif B.A."/>
            <person name="Smogorzewska A."/>
            <person name="McDonald E.R. III"/>
            <person name="Hurov K.E."/>
            <person name="Luo J."/>
            <person name="Bakalarski C.E."/>
            <person name="Zhao Z."/>
            <person name="Solimini N."/>
            <person name="Lerenthal Y."/>
            <person name="Shiloh Y."/>
            <person name="Gygi S.P."/>
            <person name="Elledge S.J."/>
        </authorList>
    </citation>
    <scope>IDENTIFICATION BY MASS SPECTROMETRY [LARGE SCALE ANALYSIS]</scope>
    <source>
        <tissue>Embryonic kidney</tissue>
    </source>
</reference>
<reference key="12">
    <citation type="journal article" date="2008" name="Mol. Cell">
        <title>Ran-binding protein 3 phosphorylation links the Ras and PI3-kinase pathways to nucleocytoplasmic transport.</title>
        <authorList>
            <person name="Yoon S.O."/>
            <person name="Shin S."/>
            <person name="Liu Y."/>
            <person name="Ballif B.A."/>
            <person name="Woo M.S."/>
            <person name="Gygi S.P."/>
            <person name="Blenis J."/>
        </authorList>
    </citation>
    <scope>PHOSPHORYLATION AT SER-126</scope>
    <scope>SUBCELLULAR LOCATION</scope>
    <scope>MUTAGENESIS OF SER-126 AND SER-221</scope>
</reference>
<reference key="13">
    <citation type="journal article" date="2008" name="Proc. Natl. Acad. Sci. U.S.A.">
        <title>A quantitative atlas of mitotic phosphorylation.</title>
        <authorList>
            <person name="Dephoure N."/>
            <person name="Zhou C."/>
            <person name="Villen J."/>
            <person name="Beausoleil S.A."/>
            <person name="Bakalarski C.E."/>
            <person name="Elledge S.J."/>
            <person name="Gygi S.P."/>
        </authorList>
    </citation>
    <scope>PHOSPHORYLATION [LARGE SCALE ANALYSIS] AT SER-100; SER-101; SER-108; THR-124; SER-333; SER-353; SER-355 AND SER-539</scope>
    <scope>IDENTIFICATION BY MASS SPECTROMETRY [LARGE SCALE ANALYSIS]</scope>
    <source>
        <tissue>Cervix carcinoma</tissue>
    </source>
</reference>
<reference key="14">
    <citation type="journal article" date="2009" name="Anal. Chem.">
        <title>Lys-N and trypsin cover complementary parts of the phosphoproteome in a refined SCX-based approach.</title>
        <authorList>
            <person name="Gauci S."/>
            <person name="Helbig A.O."/>
            <person name="Slijper M."/>
            <person name="Krijgsveld J."/>
            <person name="Heck A.J."/>
            <person name="Mohammed S."/>
        </authorList>
    </citation>
    <scope>IDENTIFICATION BY MASS SPECTROMETRY [LARGE SCALE ANALYSIS]</scope>
</reference>
<reference key="15">
    <citation type="journal article" date="2009" name="Dev. Cell">
        <title>Nuclear export of Smad2 and Smad3 by RanBP3 facilitates termination of TGF-beta signaling.</title>
        <authorList>
            <person name="Dai F."/>
            <person name="Lin X."/>
            <person name="Chang C."/>
            <person name="Feng X.H."/>
        </authorList>
    </citation>
    <scope>INTERACTION WITH SMAD2 AND SMAD3</scope>
    <scope>SUBCELLULAR LOCATION</scope>
    <scope>FUNCTION</scope>
</reference>
<reference key="16">
    <citation type="journal article" date="2009" name="Sci. Signal.">
        <title>Quantitative phosphoproteomic analysis of T cell receptor signaling reveals system-wide modulation of protein-protein interactions.</title>
        <authorList>
            <person name="Mayya V."/>
            <person name="Lundgren D.H."/>
            <person name="Hwang S.-I."/>
            <person name="Rezaul K."/>
            <person name="Wu L."/>
            <person name="Eng J.K."/>
            <person name="Rodionov V."/>
            <person name="Han D.K."/>
        </authorList>
    </citation>
    <scope>PHOSPHORYLATION [LARGE SCALE ANALYSIS] AT SER-333</scope>
    <scope>IDENTIFICATION BY MASS SPECTROMETRY [LARGE SCALE ANALYSIS]</scope>
    <source>
        <tissue>Leukemic T-cell</tissue>
    </source>
</reference>
<reference key="17">
    <citation type="journal article" date="2009" name="Science">
        <title>Lysine acetylation targets protein complexes and co-regulates major cellular functions.</title>
        <authorList>
            <person name="Choudhary C."/>
            <person name="Kumar C."/>
            <person name="Gnad F."/>
            <person name="Nielsen M.L."/>
            <person name="Rehman M."/>
            <person name="Walther T.C."/>
            <person name="Olsen J.V."/>
            <person name="Mann M."/>
        </authorList>
    </citation>
    <scope>ACETYLATION [LARGE SCALE ANALYSIS] AT LYS-21</scope>
    <scope>IDENTIFICATION BY MASS SPECTROMETRY [LARGE SCALE ANALYSIS]</scope>
</reference>
<reference key="18">
    <citation type="journal article" date="2010" name="Sci. Signal.">
        <title>Quantitative phosphoproteomics reveals widespread full phosphorylation site occupancy during mitosis.</title>
        <authorList>
            <person name="Olsen J.V."/>
            <person name="Vermeulen M."/>
            <person name="Santamaria A."/>
            <person name="Kumar C."/>
            <person name="Miller M.L."/>
            <person name="Jensen L.J."/>
            <person name="Gnad F."/>
            <person name="Cox J."/>
            <person name="Jensen T.S."/>
            <person name="Nigg E.A."/>
            <person name="Brunak S."/>
            <person name="Mann M."/>
        </authorList>
    </citation>
    <scope>IDENTIFICATION BY MASS SPECTROMETRY [LARGE SCALE ANALYSIS]</scope>
    <source>
        <tissue>Cervix carcinoma</tissue>
    </source>
</reference>
<reference key="19">
    <citation type="journal article" date="2011" name="BMC Syst. Biol.">
        <title>Initial characterization of the human central proteome.</title>
        <authorList>
            <person name="Burkard T.R."/>
            <person name="Planyavsky M."/>
            <person name="Kaupe I."/>
            <person name="Breitwieser F.P."/>
            <person name="Buerckstuemmer T."/>
            <person name="Bennett K.L."/>
            <person name="Superti-Furga G."/>
            <person name="Colinge J."/>
        </authorList>
    </citation>
    <scope>IDENTIFICATION BY MASS SPECTROMETRY [LARGE SCALE ANALYSIS]</scope>
</reference>
<reference key="20">
    <citation type="journal article" date="2011" name="Sci. Signal.">
        <title>System-wide temporal characterization of the proteome and phosphoproteome of human embryonic stem cell differentiation.</title>
        <authorList>
            <person name="Rigbolt K.T."/>
            <person name="Prokhorova T.A."/>
            <person name="Akimov V."/>
            <person name="Henningsen J."/>
            <person name="Johansen P.T."/>
            <person name="Kratchmarova I."/>
            <person name="Kassem M."/>
            <person name="Mann M."/>
            <person name="Olsen J.V."/>
            <person name="Blagoev B."/>
        </authorList>
    </citation>
    <scope>PHOSPHORYLATION [LARGE SCALE ANALYSIS] AT SER-333</scope>
    <scope>IDENTIFICATION BY MASS SPECTROMETRY [LARGE SCALE ANALYSIS]</scope>
</reference>
<reference key="21">
    <citation type="journal article" date="2012" name="Mol. Cell. Proteomics">
        <title>Comparative large-scale characterisation of plant vs. mammal proteins reveals similar and idiosyncratic N-alpha acetylation features.</title>
        <authorList>
            <person name="Bienvenut W.V."/>
            <person name="Sumpton D."/>
            <person name="Martinez A."/>
            <person name="Lilla S."/>
            <person name="Espagne C."/>
            <person name="Meinnel T."/>
            <person name="Giglione C."/>
        </authorList>
    </citation>
    <scope>ACETYLATION [LARGE SCALE ANALYSIS] AT ALA-2</scope>
    <scope>CLEAVAGE OF INITIATOR METHIONINE [LARGE SCALE ANALYSIS]</scope>
    <scope>IDENTIFICATION BY MASS SPECTROMETRY [LARGE SCALE ANALYSIS]</scope>
</reference>
<reference key="22">
    <citation type="journal article" date="2013" name="J. Proteome Res.">
        <title>Toward a comprehensive characterization of a human cancer cell phosphoproteome.</title>
        <authorList>
            <person name="Zhou H."/>
            <person name="Di Palma S."/>
            <person name="Preisinger C."/>
            <person name="Peng M."/>
            <person name="Polat A.N."/>
            <person name="Heck A.J."/>
            <person name="Mohammed S."/>
        </authorList>
    </citation>
    <scope>PHOSPHORYLATION [LARGE SCALE ANALYSIS] AT SER-108; SER-126; SER-333; SER-353; SER-355 AND SER-372</scope>
    <scope>IDENTIFICATION BY MASS SPECTROMETRY [LARGE SCALE ANALYSIS]</scope>
    <source>
        <tissue>Cervix carcinoma</tissue>
        <tissue>Erythroleukemia</tissue>
    </source>
</reference>
<reference key="23">
    <citation type="journal article" date="2014" name="J. Proteomics">
        <title>An enzyme assisted RP-RPLC approach for in-depth analysis of human liver phosphoproteome.</title>
        <authorList>
            <person name="Bian Y."/>
            <person name="Song C."/>
            <person name="Cheng K."/>
            <person name="Dong M."/>
            <person name="Wang F."/>
            <person name="Huang J."/>
            <person name="Sun D."/>
            <person name="Wang L."/>
            <person name="Ye M."/>
            <person name="Zou H."/>
        </authorList>
    </citation>
    <scope>PHOSPHORYLATION [LARGE SCALE ANALYSIS] AT THR-75; SER-101; SER-108 AND SER-333</scope>
    <scope>IDENTIFICATION BY MASS SPECTROMETRY [LARGE SCALE ANALYSIS]</scope>
    <source>
        <tissue>Liver</tissue>
    </source>
</reference>
<reference key="24">
    <citation type="submission" date="2005-11" db="PDB data bank">
        <title>Solution structure of the RAN_BP1 domain of RAN-binding protein-3.</title>
        <authorList>
            <consortium name="RIKEN structural genomics initiative (RSGI)"/>
        </authorList>
    </citation>
    <scope>STRUCTURE BY NMR OF 380-516</scope>
</reference>
<reference evidence="16" key="25">
    <citation type="journal article" date="2017" name="Biochem. Biophys. Res. Commun.">
        <title>Crystal structure of importin-alpha3 bound to the nuclear localization signal of Ran-binding protein 3.</title>
        <authorList>
            <person name="Koyama M."/>
            <person name="Matsuura Y."/>
        </authorList>
    </citation>
    <scope>X-RAY CRYSTALLOGRAPHY (3.00 ANGSTROMS) OF 99-128 IN COMPLEX WITH KPNA4</scope>
    <scope>SUBCELLULAR LOCATION</scope>
</reference>
<keyword id="KW-0002">3D-structure</keyword>
<keyword id="KW-0007">Acetylation</keyword>
<keyword id="KW-0025">Alternative splicing</keyword>
<keyword id="KW-0963">Cytoplasm</keyword>
<keyword id="KW-0539">Nucleus</keyword>
<keyword id="KW-0597">Phosphoprotein</keyword>
<keyword id="KW-0653">Protein transport</keyword>
<keyword id="KW-1267">Proteomics identification</keyword>
<keyword id="KW-1185">Reference proteome</keyword>
<keyword id="KW-0813">Transport</keyword>
<proteinExistence type="evidence at protein level"/>
<comment type="function">
    <text evidence="5 6 7 9 11">Acts as a cofactor for XPO1/CRM1-mediated nuclear export, perhaps as export complex scaffolding protein. Bound to XPO1/CRM1, stabilizes the XPO1/CRM1-cargo interaction. In the absence of Ran-bound GTP prevents binding of XPO1/CRM1 to the nuclear pore complex. Binds to CHC1/RCC1 and increases the guanine nucleotide exchange activity of CHC1/RCC1. Recruits XPO1/CRM1 to CHC1/RCC1 in a Ran-dependent manner. Negative regulator of TGF-beta signaling through interaction with the R-SMAD proteins, SMAD2 and SMAD3, and mediating their nuclear export.</text>
</comment>
<comment type="subunit">
    <text evidence="5 6 7 9 11">Interacts with CHC1 in a Ran-stimulated manner. Interacts with XPO1. Interacts (via its C-terminal R domain) with SMAD2 (dephosphorylated form via its MH1 and MH2 domains); the interaction results in the nuclear export of SMAD2 and termination of the TGF-beta signaling. Interacts (via its C-terminal R domain) with SMAD3 (dephosphorylated form via its MH1 domain); the interaction results in the nuclear export of SMAD3 and termination of the TGF-beta signaling.</text>
</comment>
<comment type="interaction">
    <interactant intactId="EBI-992681">
        <id>Q9H6Z4</id>
    </interactant>
    <interactant intactId="EBI-396343">
        <id>O00629</id>
        <label>KPNA4</label>
    </interactant>
    <organismsDiffer>false</organismsDiffer>
    <experiments>3</experiments>
</comment>
<comment type="interaction">
    <interactant intactId="EBI-992681">
        <id>Q9H6Z4</id>
    </interactant>
    <interactant intactId="EBI-989143">
        <id>P35813</id>
        <label>PPM1A</label>
    </interactant>
    <organismsDiffer>false</organismsDiffer>
    <experiments>4</experiments>
</comment>
<comment type="interaction">
    <interactant intactId="EBI-992681">
        <id>Q9H6Z4</id>
    </interactant>
    <interactant intactId="EBI-992720">
        <id>P18754</id>
        <label>RCC1</label>
    </interactant>
    <organismsDiffer>false</organismsDiffer>
    <experiments>2</experiments>
</comment>
<comment type="interaction">
    <interactant intactId="EBI-992681">
        <id>Q9H6Z4</id>
    </interactant>
    <interactant intactId="EBI-1040141">
        <id>Q15796</id>
        <label>SMAD2</label>
    </interactant>
    <organismsDiffer>false</organismsDiffer>
    <experiments>2</experiments>
</comment>
<comment type="subcellular location">
    <subcellularLocation>
        <location evidence="4 8 9">Cytoplasm</location>
    </subcellularLocation>
    <subcellularLocation>
        <location evidence="4 8 9 10">Nucleus</location>
    </subcellularLocation>
    <text evidence="4 8 10">Nuclear import is promoted by phosphorylation at Ser-126 and is dependent on KPNA4.</text>
</comment>
<comment type="alternative products">
    <event type="alternative splicing"/>
    <isoform>
        <id>Q9H6Z4-1</id>
        <name>1</name>
        <sequence type="displayed"/>
    </isoform>
    <isoform>
        <id>Q9H6Z4-2</id>
        <name>2</name>
        <name>Ranbp3-a</name>
        <sequence type="described" ref="VSP_011162"/>
    </isoform>
    <isoform>
        <id>Q9H6Z4-3</id>
        <name>3</name>
        <name>Ranbp3-b</name>
        <sequence type="described" ref="VSP_011163"/>
    </isoform>
</comment>
<comment type="tissue specificity">
    <text evidence="11">Widely expressed with high levels in testis and heart.</text>
</comment>
<comment type="PTM">
    <text evidence="8">Phosphorylation at Ser-126 promotes its import into the nucleus.</text>
</comment>
<comment type="sequence caution" evidence="15">
    <conflict type="miscellaneous discrepancy">
        <sequence resource="EMBL-CDS" id="AAH04349"/>
    </conflict>
    <text>Aberrant splicing.</text>
</comment>
<comment type="sequence caution" evidence="15">
    <conflict type="erroneous initiation">
        <sequence resource="EMBL-CDS" id="CAB43293"/>
    </conflict>
    <text>Extended N-terminus.</text>
</comment>
<gene>
    <name type="primary">RANBP3</name>
</gene>
<feature type="initiator methionine" description="Removed" evidence="22">
    <location>
        <position position="1"/>
    </location>
</feature>
<feature type="chain" id="PRO_0000097165" description="Ran-binding protein 3">
    <location>
        <begin position="2"/>
        <end position="567"/>
    </location>
</feature>
<feature type="domain" description="RanBD1" evidence="2">
    <location>
        <begin position="378"/>
        <end position="518"/>
    </location>
</feature>
<feature type="region of interest" description="Disordered" evidence="3">
    <location>
        <begin position="1"/>
        <end position="263"/>
    </location>
</feature>
<feature type="region of interest" description="Disordered" evidence="3">
    <location>
        <begin position="332"/>
        <end position="373"/>
    </location>
</feature>
<feature type="region of interest" description="Disordered" evidence="3">
    <location>
        <begin position="515"/>
        <end position="567"/>
    </location>
</feature>
<feature type="short sequence motif" description="Nuclear localization signal" evidence="4">
    <location>
        <begin position="117"/>
        <end position="125"/>
    </location>
</feature>
<feature type="compositionally biased region" description="Basic and acidic residues" evidence="3">
    <location>
        <begin position="1"/>
        <end position="10"/>
    </location>
</feature>
<feature type="compositionally biased region" description="Basic and acidic residues" evidence="3">
    <location>
        <begin position="39"/>
        <end position="49"/>
    </location>
</feature>
<feature type="compositionally biased region" description="Pro residues" evidence="3">
    <location>
        <begin position="75"/>
        <end position="89"/>
    </location>
</feature>
<feature type="compositionally biased region" description="Polar residues" evidence="3">
    <location>
        <begin position="125"/>
        <end position="134"/>
    </location>
</feature>
<feature type="compositionally biased region" description="Polar residues" evidence="3">
    <location>
        <begin position="184"/>
        <end position="197"/>
    </location>
</feature>
<feature type="compositionally biased region" description="Low complexity" evidence="3">
    <location>
        <begin position="347"/>
        <end position="362"/>
    </location>
</feature>
<feature type="compositionally biased region" description="Acidic residues" evidence="3">
    <location>
        <begin position="534"/>
        <end position="544"/>
    </location>
</feature>
<feature type="compositionally biased region" description="Low complexity" evidence="3">
    <location>
        <begin position="549"/>
        <end position="567"/>
    </location>
</feature>
<feature type="modified residue" description="N-acetylalanine" evidence="22">
    <location>
        <position position="2"/>
    </location>
</feature>
<feature type="modified residue" description="N6-acetyllysine" evidence="1">
    <location>
        <position position="9"/>
    </location>
</feature>
<feature type="modified residue" description="N6-acetyllysine" evidence="19">
    <location>
        <position position="21"/>
    </location>
</feature>
<feature type="modified residue" description="Phosphothreonine" evidence="24">
    <location>
        <position position="75"/>
    </location>
</feature>
<feature type="modified residue" description="Phosphoserine" evidence="18">
    <location>
        <position position="100"/>
    </location>
</feature>
<feature type="modified residue" description="Phosphoserine" evidence="18 24">
    <location>
        <position position="101"/>
    </location>
</feature>
<feature type="modified residue" description="Phosphoserine" evidence="17 18 23 24">
    <location>
        <position position="108"/>
    </location>
</feature>
<feature type="modified residue" description="Phosphothreonine" evidence="18">
    <location>
        <position position="124"/>
    </location>
</feature>
<feature type="modified residue" description="Phosphoserine" evidence="8 23">
    <location>
        <position position="126"/>
    </location>
</feature>
<feature type="modified residue" description="Phosphoserine" evidence="1">
    <location>
        <position position="219"/>
    </location>
</feature>
<feature type="modified residue" description="Phosphoserine" evidence="18 20 21 23 24">
    <location>
        <position position="333"/>
    </location>
</feature>
<feature type="modified residue" description="Phosphoserine" evidence="18 23">
    <location>
        <position position="353"/>
    </location>
</feature>
<feature type="modified residue" description="Phosphoserine" evidence="18 23">
    <location>
        <position position="355"/>
    </location>
</feature>
<feature type="modified residue" description="Phosphoserine" evidence="23">
    <location>
        <position position="372"/>
    </location>
</feature>
<feature type="modified residue" description="Phosphoserine" evidence="18">
    <location>
        <position position="539"/>
    </location>
</feature>
<feature type="splice variant" id="VSP_011163" description="In isoform 3." evidence="12 13 14">
    <location>
        <begin position="27"/>
        <end position="94"/>
    </location>
</feature>
<feature type="splice variant" id="VSP_011162" description="In isoform 2." evidence="14">
    <location>
        <begin position="226"/>
        <end position="230"/>
    </location>
</feature>
<feature type="sequence variant" id="VAR_051303" description="In dbSNP:rs10417885.">
    <original>A</original>
    <variation>V</variation>
    <location>
        <position position="314"/>
    </location>
</feature>
<feature type="mutagenesis site" description="Does not affect nuclear import." evidence="4">
    <original>R</original>
    <variation>A</variation>
    <location>
        <position position="110"/>
    </location>
</feature>
<feature type="mutagenesis site" description="Does not affect nuclear import." evidence="4">
    <original>PP</original>
    <variation>AA</variation>
    <location>
        <begin position="117"/>
        <end position="118"/>
    </location>
</feature>
<feature type="mutagenesis site" description="Does not affect nuclear import." evidence="4">
    <original>P</original>
    <variation>A</variation>
    <location>
        <position position="117"/>
    </location>
</feature>
<feature type="mutagenesis site" description="Does not affect nuclear import." evidence="4">
    <original>P</original>
    <variation>A</variation>
    <location>
        <position position="118"/>
    </location>
</feature>
<feature type="mutagenesis site" description="Impaired nuclear import." evidence="4">
    <original>K</original>
    <variation>A</variation>
    <location>
        <position position="120"/>
    </location>
</feature>
<feature type="mutagenesis site" description="Abolished nuclear import." evidence="4">
    <original>R</original>
    <variation>A</variation>
    <location>
        <position position="121"/>
    </location>
</feature>
<feature type="mutagenesis site" description="Abolished translocation into the nucleus." evidence="8">
    <original>S</original>
    <variation>A</variation>
    <location>
        <position position="126"/>
    </location>
</feature>
<feature type="mutagenesis site" description="Does not affect translocation into the nucleus." evidence="8">
    <original>S</original>
    <variation>A</variation>
    <location>
        <position position="221"/>
    </location>
</feature>
<feature type="sequence conflict" description="In Ref. 1; CAA69956." evidence="15" ref="1">
    <original>SS</original>
    <variation>PF</variation>
    <location>
        <begin position="358"/>
        <end position="359"/>
    </location>
</feature>
<feature type="sequence conflict" description="In Ref. 1; CAA69957." evidence="15" ref="1">
    <original>E</original>
    <variation>G</variation>
    <location>
        <position position="367"/>
    </location>
</feature>
<feature type="turn" evidence="25">
    <location>
        <begin position="389"/>
        <end position="391"/>
    </location>
</feature>
<feature type="strand" evidence="26">
    <location>
        <begin position="399"/>
        <end position="412"/>
    </location>
</feature>
<feature type="turn" evidence="26">
    <location>
        <begin position="413"/>
        <end position="416"/>
    </location>
</feature>
<feature type="strand" evidence="26">
    <location>
        <begin position="417"/>
        <end position="432"/>
    </location>
</feature>
<feature type="turn" evidence="26">
    <location>
        <begin position="434"/>
        <end position="436"/>
    </location>
</feature>
<feature type="strand" evidence="26">
    <location>
        <begin position="439"/>
        <end position="447"/>
    </location>
</feature>
<feature type="turn" evidence="26">
    <location>
        <begin position="448"/>
        <end position="450"/>
    </location>
</feature>
<feature type="strand" evidence="26">
    <location>
        <begin position="453"/>
        <end position="458"/>
    </location>
</feature>
<feature type="strand" evidence="26">
    <location>
        <begin position="465"/>
        <end position="469"/>
    </location>
</feature>
<feature type="strand" evidence="26">
    <location>
        <begin position="472"/>
        <end position="476"/>
    </location>
</feature>
<feature type="strand" evidence="26">
    <location>
        <begin position="487"/>
        <end position="491"/>
    </location>
</feature>
<feature type="helix" evidence="26">
    <location>
        <begin position="494"/>
        <end position="519"/>
    </location>
</feature>
<protein>
    <recommendedName>
        <fullName>Ran-binding protein 3</fullName>
        <shortName>RanBP3</shortName>
    </recommendedName>
</protein>
<name>RANB3_HUMAN</name>
<evidence type="ECO:0000250" key="1">
    <source>
        <dbReference type="UniProtKB" id="Q9CT10"/>
    </source>
</evidence>
<evidence type="ECO:0000255" key="2">
    <source>
        <dbReference type="PROSITE-ProRule" id="PRU00164"/>
    </source>
</evidence>
<evidence type="ECO:0000256" key="3">
    <source>
        <dbReference type="SAM" id="MobiDB-lite"/>
    </source>
</evidence>
<evidence type="ECO:0000269" key="4">
    <source>
    </source>
</evidence>
<evidence type="ECO:0000269" key="5">
    <source>
    </source>
</evidence>
<evidence type="ECO:0000269" key="6">
    <source>
    </source>
</evidence>
<evidence type="ECO:0000269" key="7">
    <source>
    </source>
</evidence>
<evidence type="ECO:0000269" key="8">
    <source>
    </source>
</evidence>
<evidence type="ECO:0000269" key="9">
    <source>
    </source>
</evidence>
<evidence type="ECO:0000269" key="10">
    <source>
    </source>
</evidence>
<evidence type="ECO:0000269" key="11">
    <source>
    </source>
</evidence>
<evidence type="ECO:0000303" key="12">
    <source>
    </source>
</evidence>
<evidence type="ECO:0000303" key="13">
    <source>
    </source>
</evidence>
<evidence type="ECO:0000303" key="14">
    <source>
    </source>
</evidence>
<evidence type="ECO:0000305" key="15"/>
<evidence type="ECO:0007744" key="16">
    <source>
        <dbReference type="PDB" id="5XZX"/>
    </source>
</evidence>
<evidence type="ECO:0007744" key="17">
    <source>
    </source>
</evidence>
<evidence type="ECO:0007744" key="18">
    <source>
    </source>
</evidence>
<evidence type="ECO:0007744" key="19">
    <source>
    </source>
</evidence>
<evidence type="ECO:0007744" key="20">
    <source>
    </source>
</evidence>
<evidence type="ECO:0007744" key="21">
    <source>
    </source>
</evidence>
<evidence type="ECO:0007744" key="22">
    <source>
    </source>
</evidence>
<evidence type="ECO:0007744" key="23">
    <source>
    </source>
</evidence>
<evidence type="ECO:0007744" key="24">
    <source>
    </source>
</evidence>
<evidence type="ECO:0007829" key="25">
    <source>
        <dbReference type="PDB" id="2CRF"/>
    </source>
</evidence>
<evidence type="ECO:0007829" key="26">
    <source>
        <dbReference type="PDB" id="2Y8G"/>
    </source>
</evidence>
<organism>
    <name type="scientific">Homo sapiens</name>
    <name type="common">Human</name>
    <dbReference type="NCBI Taxonomy" id="9606"/>
    <lineage>
        <taxon>Eukaryota</taxon>
        <taxon>Metazoa</taxon>
        <taxon>Chordata</taxon>
        <taxon>Craniata</taxon>
        <taxon>Vertebrata</taxon>
        <taxon>Euteleostomi</taxon>
        <taxon>Mammalia</taxon>
        <taxon>Eutheria</taxon>
        <taxon>Euarchontoglires</taxon>
        <taxon>Primates</taxon>
        <taxon>Haplorrhini</taxon>
        <taxon>Catarrhini</taxon>
        <taxon>Hominidae</taxon>
        <taxon>Homo</taxon>
    </lineage>
</organism>
<dbReference type="EMBL" id="Y08697">
    <property type="protein sequence ID" value="CAA69956.1"/>
    <property type="molecule type" value="mRNA"/>
</dbReference>
<dbReference type="EMBL" id="Y08698">
    <property type="protein sequence ID" value="CAA69957.1"/>
    <property type="molecule type" value="mRNA"/>
</dbReference>
<dbReference type="EMBL" id="AK025300">
    <property type="protein sequence ID" value="BAB15106.1"/>
    <property type="molecule type" value="mRNA"/>
</dbReference>
<dbReference type="EMBL" id="AK314343">
    <property type="protein sequence ID" value="BAG36985.1"/>
    <property type="molecule type" value="mRNA"/>
</dbReference>
<dbReference type="EMBL" id="AL050149">
    <property type="protein sequence ID" value="CAB43293.1"/>
    <property type="status" value="ALT_INIT"/>
    <property type="molecule type" value="mRNA"/>
</dbReference>
<dbReference type="EMBL" id="AC004602">
    <property type="protein sequence ID" value="AAC14485.1"/>
    <property type="molecule type" value="Genomic_DNA"/>
</dbReference>
<dbReference type="EMBL" id="AC104532">
    <property type="status" value="NOT_ANNOTATED_CDS"/>
    <property type="molecule type" value="Genomic_DNA"/>
</dbReference>
<dbReference type="EMBL" id="AC093050">
    <property type="status" value="NOT_ANNOTATED_CDS"/>
    <property type="molecule type" value="Genomic_DNA"/>
</dbReference>
<dbReference type="EMBL" id="AC005784">
    <property type="status" value="NOT_ANNOTATED_CDS"/>
    <property type="molecule type" value="Genomic_DNA"/>
</dbReference>
<dbReference type="EMBL" id="BC004349">
    <property type="protein sequence ID" value="AAH04349.1"/>
    <property type="status" value="ALT_SEQ"/>
    <property type="molecule type" value="mRNA"/>
</dbReference>
<dbReference type="CCDS" id="CCDS42477.1">
    <molecule id="Q9H6Z4-3"/>
</dbReference>
<dbReference type="CCDS" id="CCDS42478.1">
    <molecule id="Q9H6Z4-1"/>
</dbReference>
<dbReference type="CCDS" id="CCDS45935.1">
    <molecule id="Q9H6Z4-2"/>
</dbReference>
<dbReference type="PIR" id="T08778">
    <property type="entry name" value="T08778"/>
</dbReference>
<dbReference type="RefSeq" id="NP_001287794.1">
    <property type="nucleotide sequence ID" value="NM_001300865.1"/>
</dbReference>
<dbReference type="RefSeq" id="NP_003615.2">
    <molecule id="Q9H6Z4-2"/>
    <property type="nucleotide sequence ID" value="NM_003624.3"/>
</dbReference>
<dbReference type="RefSeq" id="NP_015559.2">
    <molecule id="Q9H6Z4-3"/>
    <property type="nucleotide sequence ID" value="NM_007320.3"/>
</dbReference>
<dbReference type="RefSeq" id="NP_015561.1">
    <molecule id="Q9H6Z4-1"/>
    <property type="nucleotide sequence ID" value="NM_007322.3"/>
</dbReference>
<dbReference type="PDB" id="2CRF">
    <property type="method" value="NMR"/>
    <property type="chains" value="A=380-516"/>
</dbReference>
<dbReference type="PDB" id="2Y8F">
    <property type="method" value="X-ray"/>
    <property type="resolution" value="2.10 A"/>
    <property type="chains" value="A/B/C/D=388-522"/>
</dbReference>
<dbReference type="PDB" id="2Y8G">
    <property type="method" value="X-ray"/>
    <property type="resolution" value="1.61 A"/>
    <property type="chains" value="A/B=388-522"/>
</dbReference>
<dbReference type="PDB" id="5XZX">
    <property type="method" value="X-ray"/>
    <property type="resolution" value="3.00 A"/>
    <property type="chains" value="B=99-128"/>
</dbReference>
<dbReference type="PDBsum" id="2CRF"/>
<dbReference type="PDBsum" id="2Y8F"/>
<dbReference type="PDBsum" id="2Y8G"/>
<dbReference type="PDBsum" id="5XZX"/>
<dbReference type="SMR" id="Q9H6Z4"/>
<dbReference type="BioGRID" id="114070">
    <property type="interactions" value="107"/>
</dbReference>
<dbReference type="CORUM" id="Q9H6Z4"/>
<dbReference type="FunCoup" id="Q9H6Z4">
    <property type="interactions" value="4001"/>
</dbReference>
<dbReference type="IntAct" id="Q9H6Z4">
    <property type="interactions" value="29"/>
</dbReference>
<dbReference type="MINT" id="Q9H6Z4"/>
<dbReference type="STRING" id="9606.ENSP00000341483"/>
<dbReference type="GlyGen" id="Q9H6Z4">
    <property type="glycosylation" value="2 sites, 1 N-linked glycan (1 site), 1 O-linked glycan (1 site)"/>
</dbReference>
<dbReference type="iPTMnet" id="Q9H6Z4"/>
<dbReference type="MetOSite" id="Q9H6Z4"/>
<dbReference type="PhosphoSitePlus" id="Q9H6Z4"/>
<dbReference type="BioMuta" id="RANBP3"/>
<dbReference type="DMDM" id="51316528"/>
<dbReference type="jPOST" id="Q9H6Z4"/>
<dbReference type="MassIVE" id="Q9H6Z4"/>
<dbReference type="PaxDb" id="9606-ENSP00000341483"/>
<dbReference type="PeptideAtlas" id="Q9H6Z4"/>
<dbReference type="ProteomicsDB" id="81064">
    <molecule id="Q9H6Z4-1"/>
</dbReference>
<dbReference type="ProteomicsDB" id="81065">
    <molecule id="Q9H6Z4-2"/>
</dbReference>
<dbReference type="ProteomicsDB" id="81066">
    <molecule id="Q9H6Z4-3"/>
</dbReference>
<dbReference type="Pumba" id="Q9H6Z4"/>
<dbReference type="Antibodypedia" id="24035">
    <property type="antibodies" value="270 antibodies from 29 providers"/>
</dbReference>
<dbReference type="DNASU" id="8498"/>
<dbReference type="Ensembl" id="ENST00000034275.12">
    <molecule id="Q9H6Z4-3"/>
    <property type="protein sequence ID" value="ENSP00000034275.7"/>
    <property type="gene ID" value="ENSG00000031823.14"/>
</dbReference>
<dbReference type="Ensembl" id="ENST00000340578.10">
    <molecule id="Q9H6Z4-1"/>
    <property type="protein sequence ID" value="ENSP00000341483.5"/>
    <property type="gene ID" value="ENSG00000031823.14"/>
</dbReference>
<dbReference type="Ensembl" id="ENST00000439268.6">
    <molecule id="Q9H6Z4-2"/>
    <property type="protein sequence ID" value="ENSP00000404837.1"/>
    <property type="gene ID" value="ENSG00000031823.14"/>
</dbReference>
<dbReference type="GeneID" id="8498"/>
<dbReference type="KEGG" id="hsa:8498"/>
<dbReference type="MANE-Select" id="ENST00000340578.10">
    <property type="protein sequence ID" value="ENSP00000341483.5"/>
    <property type="RefSeq nucleotide sequence ID" value="NM_007322.3"/>
    <property type="RefSeq protein sequence ID" value="NP_015561.1"/>
</dbReference>
<dbReference type="UCSC" id="uc002mdw.4">
    <molecule id="Q9H6Z4-1"/>
    <property type="organism name" value="human"/>
</dbReference>
<dbReference type="AGR" id="HGNC:9850"/>
<dbReference type="CTD" id="8498"/>
<dbReference type="DisGeNET" id="8498"/>
<dbReference type="GeneCards" id="RANBP3"/>
<dbReference type="HGNC" id="HGNC:9850">
    <property type="gene designation" value="RANBP3"/>
</dbReference>
<dbReference type="HPA" id="ENSG00000031823">
    <property type="expression patterns" value="Low tissue specificity"/>
</dbReference>
<dbReference type="MIM" id="603327">
    <property type="type" value="gene"/>
</dbReference>
<dbReference type="neXtProt" id="NX_Q9H6Z4"/>
<dbReference type="OpenTargets" id="ENSG00000031823"/>
<dbReference type="PharmGKB" id="PA34211"/>
<dbReference type="VEuPathDB" id="HostDB:ENSG00000031823"/>
<dbReference type="eggNOG" id="KOG0866">
    <property type="taxonomic scope" value="Eukaryota"/>
</dbReference>
<dbReference type="GeneTree" id="ENSGT00940000158588"/>
<dbReference type="InParanoid" id="Q9H6Z4"/>
<dbReference type="OMA" id="MQCKLYQ"/>
<dbReference type="OrthoDB" id="185618at2759"/>
<dbReference type="PAN-GO" id="Q9H6Z4">
    <property type="GO annotations" value="4 GO annotations based on evolutionary models"/>
</dbReference>
<dbReference type="PhylomeDB" id="Q9H6Z4"/>
<dbReference type="TreeFam" id="TF313181"/>
<dbReference type="PathwayCommons" id="Q9H6Z4"/>
<dbReference type="SignaLink" id="Q9H6Z4"/>
<dbReference type="SIGNOR" id="Q9H6Z4"/>
<dbReference type="BioGRID-ORCS" id="8498">
    <property type="hits" value="143 hits in 1166 CRISPR screens"/>
</dbReference>
<dbReference type="CD-CODE" id="DEE660B4">
    <property type="entry name" value="Stress granule"/>
</dbReference>
<dbReference type="ChiTaRS" id="RANBP3">
    <property type="organism name" value="human"/>
</dbReference>
<dbReference type="EvolutionaryTrace" id="Q9H6Z4"/>
<dbReference type="GeneWiki" id="RANBP3"/>
<dbReference type="GenomeRNAi" id="8498"/>
<dbReference type="Pharos" id="Q9H6Z4">
    <property type="development level" value="Tbio"/>
</dbReference>
<dbReference type="PRO" id="PR:Q9H6Z4"/>
<dbReference type="Proteomes" id="UP000005640">
    <property type="component" value="Chromosome 19"/>
</dbReference>
<dbReference type="RNAct" id="Q9H6Z4">
    <property type="molecule type" value="protein"/>
</dbReference>
<dbReference type="Bgee" id="ENSG00000031823">
    <property type="expression patterns" value="Expressed in sural nerve and 190 other cell types or tissues"/>
</dbReference>
<dbReference type="ExpressionAtlas" id="Q9H6Z4">
    <property type="expression patterns" value="baseline and differential"/>
</dbReference>
<dbReference type="GO" id="GO:0005737">
    <property type="term" value="C:cytoplasm"/>
    <property type="evidence" value="ECO:0000314"/>
    <property type="project" value="UniProtKB"/>
</dbReference>
<dbReference type="GO" id="GO:0005654">
    <property type="term" value="C:nucleoplasm"/>
    <property type="evidence" value="ECO:0000314"/>
    <property type="project" value="HPA"/>
</dbReference>
<dbReference type="GO" id="GO:0005634">
    <property type="term" value="C:nucleus"/>
    <property type="evidence" value="ECO:0000314"/>
    <property type="project" value="GO_Central"/>
</dbReference>
<dbReference type="GO" id="GO:0070412">
    <property type="term" value="F:R-SMAD binding"/>
    <property type="evidence" value="ECO:0000353"/>
    <property type="project" value="UniProtKB"/>
</dbReference>
<dbReference type="GO" id="GO:0031267">
    <property type="term" value="F:small GTPase binding"/>
    <property type="evidence" value="ECO:0000353"/>
    <property type="project" value="GO_Central"/>
</dbReference>
<dbReference type="GO" id="GO:0006611">
    <property type="term" value="P:protein export from nucleus"/>
    <property type="evidence" value="ECO:0000318"/>
    <property type="project" value="GO_Central"/>
</dbReference>
<dbReference type="CDD" id="cd13180">
    <property type="entry name" value="RanBD_RanBP3"/>
    <property type="match status" value="1"/>
</dbReference>
<dbReference type="DisProt" id="DP02364">
    <molecule id="Q9H6Z4-3"/>
</dbReference>
<dbReference type="FunFam" id="2.30.29.30:FF:000106">
    <property type="entry name" value="ran-binding protein 3 isoform X2"/>
    <property type="match status" value="1"/>
</dbReference>
<dbReference type="Gene3D" id="2.30.29.30">
    <property type="entry name" value="Pleckstrin-homology domain (PH domain)/Phosphotyrosine-binding domain (PTB)"/>
    <property type="match status" value="1"/>
</dbReference>
<dbReference type="InterPro" id="IPR011993">
    <property type="entry name" value="PH-like_dom_sf"/>
</dbReference>
<dbReference type="InterPro" id="IPR000156">
    <property type="entry name" value="Ran_bind_dom"/>
</dbReference>
<dbReference type="InterPro" id="IPR045255">
    <property type="entry name" value="RanBP1-like"/>
</dbReference>
<dbReference type="PANTHER" id="PTHR23138">
    <property type="entry name" value="RAN BINDING PROTEIN"/>
    <property type="match status" value="1"/>
</dbReference>
<dbReference type="PANTHER" id="PTHR23138:SF91">
    <property type="entry name" value="RAN-BINDING PROTEIN 3"/>
    <property type="match status" value="1"/>
</dbReference>
<dbReference type="Pfam" id="PF00638">
    <property type="entry name" value="Ran_BP1"/>
    <property type="match status" value="1"/>
</dbReference>
<dbReference type="SMART" id="SM00160">
    <property type="entry name" value="RanBD"/>
    <property type="match status" value="1"/>
</dbReference>
<dbReference type="SUPFAM" id="SSF50729">
    <property type="entry name" value="PH domain-like"/>
    <property type="match status" value="1"/>
</dbReference>
<dbReference type="PROSITE" id="PS50196">
    <property type="entry name" value="RANBD1"/>
    <property type="match status" value="1"/>
</dbReference>